<reference key="1">
    <citation type="journal article" date="1988" name="Int. J. Pept. Protein Res.">
        <title>Purification and primary structure of ostrich insulin.</title>
        <authorList>
            <person name="Evans T.K."/>
            <person name="Litthauer D."/>
            <person name="Oelofsen W."/>
        </authorList>
    </citation>
    <scope>PROTEIN SEQUENCE</scope>
</reference>
<gene>
    <name type="primary">INS</name>
</gene>
<protein>
    <recommendedName>
        <fullName>Insulin</fullName>
    </recommendedName>
    <component>
        <recommendedName>
            <fullName>Insulin B chain</fullName>
        </recommendedName>
    </component>
    <component>
        <recommendedName>
            <fullName>Insulin A chain</fullName>
        </recommendedName>
    </component>
</protein>
<proteinExistence type="evidence at protein level"/>
<accession>P67969</accession>
<accession>P01332</accession>
<comment type="function">
    <text>Insulin decreases blood glucose concentration. It increases cell permeability to monosaccharides, amino acids and fatty acids. It accelerates glycolysis, the pentose phosphate cycle, and glycogen synthesis in liver.</text>
</comment>
<comment type="subunit">
    <text>Heterodimer of a B chain and an A chain linked by two disulfide bonds.</text>
</comment>
<comment type="subcellular location">
    <subcellularLocation>
        <location>Secreted</location>
    </subcellularLocation>
</comment>
<comment type="similarity">
    <text evidence="1">Belongs to the insulin family.</text>
</comment>
<organism>
    <name type="scientific">Struthio camelus</name>
    <name type="common">Common ostrich</name>
    <dbReference type="NCBI Taxonomy" id="8801"/>
    <lineage>
        <taxon>Eukaryota</taxon>
        <taxon>Metazoa</taxon>
        <taxon>Chordata</taxon>
        <taxon>Craniata</taxon>
        <taxon>Vertebrata</taxon>
        <taxon>Euteleostomi</taxon>
        <taxon>Archelosauria</taxon>
        <taxon>Archosauria</taxon>
        <taxon>Dinosauria</taxon>
        <taxon>Saurischia</taxon>
        <taxon>Theropoda</taxon>
        <taxon>Coelurosauria</taxon>
        <taxon>Aves</taxon>
        <taxon>Palaeognathae</taxon>
        <taxon>Struthioniformes</taxon>
        <taxon>Struthionidae</taxon>
        <taxon>Struthio</taxon>
    </lineage>
</organism>
<dbReference type="SMR" id="P67969"/>
<dbReference type="GO" id="GO:0005615">
    <property type="term" value="C:extracellular space"/>
    <property type="evidence" value="ECO:0007669"/>
    <property type="project" value="TreeGrafter"/>
</dbReference>
<dbReference type="GO" id="GO:0005179">
    <property type="term" value="F:hormone activity"/>
    <property type="evidence" value="ECO:0007669"/>
    <property type="project" value="UniProtKB-KW"/>
</dbReference>
<dbReference type="GO" id="GO:0006006">
    <property type="term" value="P:glucose metabolic process"/>
    <property type="evidence" value="ECO:0007669"/>
    <property type="project" value="UniProtKB-KW"/>
</dbReference>
<dbReference type="CDD" id="cd04367">
    <property type="entry name" value="IlGF_insulin_like"/>
    <property type="match status" value="1"/>
</dbReference>
<dbReference type="Gene3D" id="1.10.100.10">
    <property type="entry name" value="Insulin-like"/>
    <property type="match status" value="1"/>
</dbReference>
<dbReference type="InterPro" id="IPR004825">
    <property type="entry name" value="Insulin"/>
</dbReference>
<dbReference type="InterPro" id="IPR016179">
    <property type="entry name" value="Insulin-like"/>
</dbReference>
<dbReference type="InterPro" id="IPR036438">
    <property type="entry name" value="Insulin-like_sf"/>
</dbReference>
<dbReference type="InterPro" id="IPR022353">
    <property type="entry name" value="Insulin_CS"/>
</dbReference>
<dbReference type="InterPro" id="IPR022352">
    <property type="entry name" value="Insulin_family"/>
</dbReference>
<dbReference type="PANTHER" id="PTHR11454:SF9">
    <property type="entry name" value="INSULIN"/>
    <property type="match status" value="1"/>
</dbReference>
<dbReference type="PANTHER" id="PTHR11454">
    <property type="entry name" value="INSULIN/INSULIN GROWTH FACTOR"/>
    <property type="match status" value="1"/>
</dbReference>
<dbReference type="Pfam" id="PF00049">
    <property type="entry name" value="Insulin"/>
    <property type="match status" value="1"/>
</dbReference>
<dbReference type="PRINTS" id="PR00277">
    <property type="entry name" value="INSULIN"/>
</dbReference>
<dbReference type="PRINTS" id="PR00276">
    <property type="entry name" value="INSULINFAMLY"/>
</dbReference>
<dbReference type="SMART" id="SM00078">
    <property type="entry name" value="IlGF"/>
    <property type="match status" value="1"/>
</dbReference>
<dbReference type="SUPFAM" id="SSF56994">
    <property type="entry name" value="Insulin-like"/>
    <property type="match status" value="1"/>
</dbReference>
<dbReference type="PROSITE" id="PS00262">
    <property type="entry name" value="INSULIN"/>
    <property type="match status" value="1"/>
</dbReference>
<name>INS_STRCA</name>
<feature type="peptide" id="PRO_0000015917" description="Insulin B chain">
    <location>
        <begin position="1"/>
        <end position="30"/>
    </location>
</feature>
<feature type="peptide" id="PRO_0000015918" description="Insulin A chain">
    <location>
        <begin position="31"/>
        <end position="51"/>
    </location>
</feature>
<feature type="disulfide bond" description="Interchain (between B and A chains)">
    <location>
        <begin position="7"/>
        <end position="37"/>
    </location>
</feature>
<feature type="disulfide bond" description="Interchain (between B and A chains)">
    <location>
        <begin position="19"/>
        <end position="50"/>
    </location>
</feature>
<feature type="disulfide bond">
    <location>
        <begin position="36"/>
        <end position="41"/>
    </location>
</feature>
<feature type="non-consecutive residues" evidence="1">
    <location>
        <begin position="30"/>
        <end position="31"/>
    </location>
</feature>
<keyword id="KW-0119">Carbohydrate metabolism</keyword>
<keyword id="KW-0903">Direct protein sequencing</keyword>
<keyword id="KW-1015">Disulfide bond</keyword>
<keyword id="KW-0313">Glucose metabolism</keyword>
<keyword id="KW-0372">Hormone</keyword>
<keyword id="KW-0964">Secreted</keyword>
<sequence length="51" mass="5698">AANQHLCGSHLVEALYLVCGERGFFYSPKAGIVEQCCHNTCSLYQLENYCN</sequence>
<evidence type="ECO:0000305" key="1"/>